<sequence>MKTLLLTLVVVTIVCLDLGDSLICYLDFSVPHTCAPGEKLCYTRTWNDGRGTRIERGCAATCPIPKKPEIHVTCCSTDRCNPHPKQKPH</sequence>
<organism>
    <name type="scientific">Pseudonaja textilis</name>
    <name type="common">Eastern brown snake</name>
    <dbReference type="NCBI Taxonomy" id="8673"/>
    <lineage>
        <taxon>Eukaryota</taxon>
        <taxon>Metazoa</taxon>
        <taxon>Chordata</taxon>
        <taxon>Craniata</taxon>
        <taxon>Vertebrata</taxon>
        <taxon>Euteleostomi</taxon>
        <taxon>Lepidosauria</taxon>
        <taxon>Squamata</taxon>
        <taxon>Bifurcata</taxon>
        <taxon>Unidentata</taxon>
        <taxon>Episquamata</taxon>
        <taxon>Toxicofera</taxon>
        <taxon>Serpentes</taxon>
        <taxon>Colubroidea</taxon>
        <taxon>Elapidae</taxon>
        <taxon>Hydrophiinae</taxon>
        <taxon>Pseudonaja</taxon>
    </lineage>
</organism>
<comment type="function">
    <text evidence="2 3">Binds with high affinity to muscular (alpha-1/CHRNA1) and neuronal (alpha-7/CHRNA7) nicotinic acetylcholine receptor (nAChR) and inhibits acetylcholine from binding to the receptor (By similarity), thereby impairing neuromuscular and neuronal transmission (PubMed:17906946).</text>
</comment>
<comment type="subcellular location">
    <subcellularLocation>
        <location evidence="1">Secreted</location>
    </subcellularLocation>
</comment>
<comment type="tissue specificity">
    <text evidence="4">Expressed by the venom gland.</text>
</comment>
<comment type="miscellaneous">
    <text evidence="4">Has the length of long neurotoxins, but only 4 disulfide bonds, as short neurotoxins.</text>
</comment>
<comment type="similarity">
    <text evidence="4">Belongs to the three-finger toxin family. Long-chain subfamily. Type II alpha-neurotoxin sub-subfamily.</text>
</comment>
<reference key="1">
    <citation type="journal article" date="2007" name="Cell. Mol. Life Sci.">
        <title>Distinct activities of novel neurotoxins from Australian venomous snakes for nicotinic acetylcholine receptors.</title>
        <authorList>
            <person name="St Pierre L."/>
            <person name="Fischer H."/>
            <person name="Adams D.J."/>
            <person name="Schenning M."/>
            <person name="Lavidis N."/>
            <person name="de Jersey J."/>
            <person name="Masci P.P."/>
            <person name="Lavin M.F."/>
        </authorList>
    </citation>
    <scope>NUCLEOTIDE SEQUENCE [MRNA]</scope>
    <scope>FUNCTION</scope>
    <source>
        <tissue>Venom gland</tissue>
    </source>
</reference>
<name>3L21_PSETE</name>
<feature type="signal peptide" evidence="1">
    <location>
        <begin position="1"/>
        <end position="21"/>
    </location>
</feature>
<feature type="chain" id="PRO_5000279919" description="Long neurotoxin 1">
    <location>
        <begin position="22"/>
        <end position="89"/>
    </location>
</feature>
<feature type="disulfide bond" evidence="1">
    <location>
        <begin position="24"/>
        <end position="41"/>
    </location>
</feature>
<feature type="disulfide bond" evidence="1">
    <location>
        <begin position="34"/>
        <end position="58"/>
    </location>
</feature>
<feature type="disulfide bond" evidence="1">
    <location>
        <begin position="62"/>
        <end position="74"/>
    </location>
</feature>
<feature type="disulfide bond" evidence="1">
    <location>
        <begin position="75"/>
        <end position="80"/>
    </location>
</feature>
<dbReference type="EMBL" id="DQ917511">
    <property type="protein sequence ID" value="ABK63540.1"/>
    <property type="molecule type" value="mRNA"/>
</dbReference>
<dbReference type="SMR" id="A8HDK6"/>
<dbReference type="Proteomes" id="UP000472273">
    <property type="component" value="Unplaced"/>
</dbReference>
<dbReference type="GO" id="GO:0005576">
    <property type="term" value="C:extracellular region"/>
    <property type="evidence" value="ECO:0007669"/>
    <property type="project" value="UniProtKB-SubCell"/>
</dbReference>
<dbReference type="GO" id="GO:0030550">
    <property type="term" value="F:acetylcholine receptor inhibitor activity"/>
    <property type="evidence" value="ECO:0007669"/>
    <property type="project" value="UniProtKB-KW"/>
</dbReference>
<dbReference type="GO" id="GO:0099106">
    <property type="term" value="F:ion channel regulator activity"/>
    <property type="evidence" value="ECO:0007669"/>
    <property type="project" value="UniProtKB-KW"/>
</dbReference>
<dbReference type="GO" id="GO:0090729">
    <property type="term" value="F:toxin activity"/>
    <property type="evidence" value="ECO:0007669"/>
    <property type="project" value="UniProtKB-KW"/>
</dbReference>
<dbReference type="CDD" id="cd00206">
    <property type="entry name" value="TFP_snake_toxin"/>
    <property type="match status" value="1"/>
</dbReference>
<dbReference type="FunFam" id="2.10.60.10:FF:000024">
    <property type="entry name" value="Cytotoxin 1"/>
    <property type="match status" value="1"/>
</dbReference>
<dbReference type="Gene3D" id="2.10.60.10">
    <property type="entry name" value="CD59"/>
    <property type="match status" value="1"/>
</dbReference>
<dbReference type="InterPro" id="IPR003571">
    <property type="entry name" value="Snake_3FTx"/>
</dbReference>
<dbReference type="InterPro" id="IPR045860">
    <property type="entry name" value="Snake_toxin-like_sf"/>
</dbReference>
<dbReference type="InterPro" id="IPR018354">
    <property type="entry name" value="Snake_toxin_con_site"/>
</dbReference>
<dbReference type="InterPro" id="IPR054131">
    <property type="entry name" value="Toxin_cobra-type"/>
</dbReference>
<dbReference type="Pfam" id="PF21947">
    <property type="entry name" value="Toxin_cobra-type"/>
    <property type="match status" value="1"/>
</dbReference>
<dbReference type="SUPFAM" id="SSF57302">
    <property type="entry name" value="Snake toxin-like"/>
    <property type="match status" value="1"/>
</dbReference>
<dbReference type="PROSITE" id="PS00272">
    <property type="entry name" value="SNAKE_TOXIN"/>
    <property type="match status" value="1"/>
</dbReference>
<keyword id="KW-0008">Acetylcholine receptor inhibiting toxin</keyword>
<keyword id="KW-1015">Disulfide bond</keyword>
<keyword id="KW-0872">Ion channel impairing toxin</keyword>
<keyword id="KW-0528">Neurotoxin</keyword>
<keyword id="KW-0629">Postsynaptic neurotoxin</keyword>
<keyword id="KW-1185">Reference proteome</keyword>
<keyword id="KW-0964">Secreted</keyword>
<keyword id="KW-0732">Signal</keyword>
<keyword id="KW-0800">Toxin</keyword>
<protein>
    <recommendedName>
        <fullName>Long neurotoxin 1</fullName>
        <shortName>LNTX-1</shortName>
    </recommendedName>
</protein>
<proteinExistence type="inferred from homology"/>
<accession>A8HDK6</accession>
<evidence type="ECO:0000250" key="1"/>
<evidence type="ECO:0000250" key="2">
    <source>
        <dbReference type="UniProtKB" id="P60615"/>
    </source>
</evidence>
<evidence type="ECO:0000269" key="3">
    <source>
    </source>
</evidence>
<evidence type="ECO:0000305" key="4"/>